<protein>
    <recommendedName>
        <fullName>Uncharacterized protein YoyE</fullName>
    </recommendedName>
</protein>
<proteinExistence type="predicted"/>
<organism>
    <name type="scientific">Bacillus subtilis (strain 168)</name>
    <dbReference type="NCBI Taxonomy" id="224308"/>
    <lineage>
        <taxon>Bacteria</taxon>
        <taxon>Bacillati</taxon>
        <taxon>Bacillota</taxon>
        <taxon>Bacilli</taxon>
        <taxon>Bacillales</taxon>
        <taxon>Bacillaceae</taxon>
        <taxon>Bacillus</taxon>
    </lineage>
</organism>
<keyword id="KW-1185">Reference proteome</keyword>
<gene>
    <name type="primary">yoyE</name>
    <name type="ordered locus">BSU19639</name>
</gene>
<reference key="1">
    <citation type="journal article" date="1997" name="Nature">
        <title>The complete genome sequence of the Gram-positive bacterium Bacillus subtilis.</title>
        <authorList>
            <person name="Kunst F."/>
            <person name="Ogasawara N."/>
            <person name="Moszer I."/>
            <person name="Albertini A.M."/>
            <person name="Alloni G."/>
            <person name="Azevedo V."/>
            <person name="Bertero M.G."/>
            <person name="Bessieres P."/>
            <person name="Bolotin A."/>
            <person name="Borchert S."/>
            <person name="Borriss R."/>
            <person name="Boursier L."/>
            <person name="Brans A."/>
            <person name="Braun M."/>
            <person name="Brignell S.C."/>
            <person name="Bron S."/>
            <person name="Brouillet S."/>
            <person name="Bruschi C.V."/>
            <person name="Caldwell B."/>
            <person name="Capuano V."/>
            <person name="Carter N.M."/>
            <person name="Choi S.-K."/>
            <person name="Codani J.-J."/>
            <person name="Connerton I.F."/>
            <person name="Cummings N.J."/>
            <person name="Daniel R.A."/>
            <person name="Denizot F."/>
            <person name="Devine K.M."/>
            <person name="Duesterhoeft A."/>
            <person name="Ehrlich S.D."/>
            <person name="Emmerson P.T."/>
            <person name="Entian K.-D."/>
            <person name="Errington J."/>
            <person name="Fabret C."/>
            <person name="Ferrari E."/>
            <person name="Foulger D."/>
            <person name="Fritz C."/>
            <person name="Fujita M."/>
            <person name="Fujita Y."/>
            <person name="Fuma S."/>
            <person name="Galizzi A."/>
            <person name="Galleron N."/>
            <person name="Ghim S.-Y."/>
            <person name="Glaser P."/>
            <person name="Goffeau A."/>
            <person name="Golightly E.J."/>
            <person name="Grandi G."/>
            <person name="Guiseppi G."/>
            <person name="Guy B.J."/>
            <person name="Haga K."/>
            <person name="Haiech J."/>
            <person name="Harwood C.R."/>
            <person name="Henaut A."/>
            <person name="Hilbert H."/>
            <person name="Holsappel S."/>
            <person name="Hosono S."/>
            <person name="Hullo M.-F."/>
            <person name="Itaya M."/>
            <person name="Jones L.-M."/>
            <person name="Joris B."/>
            <person name="Karamata D."/>
            <person name="Kasahara Y."/>
            <person name="Klaerr-Blanchard M."/>
            <person name="Klein C."/>
            <person name="Kobayashi Y."/>
            <person name="Koetter P."/>
            <person name="Koningstein G."/>
            <person name="Krogh S."/>
            <person name="Kumano M."/>
            <person name="Kurita K."/>
            <person name="Lapidus A."/>
            <person name="Lardinois S."/>
            <person name="Lauber J."/>
            <person name="Lazarevic V."/>
            <person name="Lee S.-M."/>
            <person name="Levine A."/>
            <person name="Liu H."/>
            <person name="Masuda S."/>
            <person name="Mauel C."/>
            <person name="Medigue C."/>
            <person name="Medina N."/>
            <person name="Mellado R.P."/>
            <person name="Mizuno M."/>
            <person name="Moestl D."/>
            <person name="Nakai S."/>
            <person name="Noback M."/>
            <person name="Noone D."/>
            <person name="O'Reilly M."/>
            <person name="Ogawa K."/>
            <person name="Ogiwara A."/>
            <person name="Oudega B."/>
            <person name="Park S.-H."/>
            <person name="Parro V."/>
            <person name="Pohl T.M."/>
            <person name="Portetelle D."/>
            <person name="Porwollik S."/>
            <person name="Prescott A.M."/>
            <person name="Presecan E."/>
            <person name="Pujic P."/>
            <person name="Purnelle B."/>
            <person name="Rapoport G."/>
            <person name="Rey M."/>
            <person name="Reynolds S."/>
            <person name="Rieger M."/>
            <person name="Rivolta C."/>
            <person name="Rocha E."/>
            <person name="Roche B."/>
            <person name="Rose M."/>
            <person name="Sadaie Y."/>
            <person name="Sato T."/>
            <person name="Scanlan E."/>
            <person name="Schleich S."/>
            <person name="Schroeter R."/>
            <person name="Scoffone F."/>
            <person name="Sekiguchi J."/>
            <person name="Sekowska A."/>
            <person name="Seror S.J."/>
            <person name="Serror P."/>
            <person name="Shin B.-S."/>
            <person name="Soldo B."/>
            <person name="Sorokin A."/>
            <person name="Tacconi E."/>
            <person name="Takagi T."/>
            <person name="Takahashi H."/>
            <person name="Takemaru K."/>
            <person name="Takeuchi M."/>
            <person name="Tamakoshi A."/>
            <person name="Tanaka T."/>
            <person name="Terpstra P."/>
            <person name="Tognoni A."/>
            <person name="Tosato V."/>
            <person name="Uchiyama S."/>
            <person name="Vandenbol M."/>
            <person name="Vannier F."/>
            <person name="Vassarotti A."/>
            <person name="Viari A."/>
            <person name="Wambutt R."/>
            <person name="Wedler E."/>
            <person name="Wedler H."/>
            <person name="Weitzenegger T."/>
            <person name="Winters P."/>
            <person name="Wipat A."/>
            <person name="Yamamoto H."/>
            <person name="Yamane K."/>
            <person name="Yasumoto K."/>
            <person name="Yata K."/>
            <person name="Yoshida K."/>
            <person name="Yoshikawa H.-F."/>
            <person name="Zumstein E."/>
            <person name="Yoshikawa H."/>
            <person name="Danchin A."/>
        </authorList>
    </citation>
    <scope>NUCLEOTIDE SEQUENCE [LARGE SCALE GENOMIC DNA]</scope>
    <source>
        <strain>168</strain>
    </source>
</reference>
<dbReference type="EMBL" id="AL009126">
    <property type="protein sequence ID" value="CAX52640.1"/>
    <property type="molecule type" value="Genomic_DNA"/>
</dbReference>
<dbReference type="RefSeq" id="WP_003231174.1">
    <property type="nucleotide sequence ID" value="NZ_OZ025638.1"/>
</dbReference>
<dbReference type="RefSeq" id="YP_003097743.1">
    <property type="nucleotide sequence ID" value="NC_000964.3"/>
</dbReference>
<dbReference type="SMR" id="C0H432"/>
<dbReference type="FunCoup" id="C0H432">
    <property type="interactions" value="2"/>
</dbReference>
<dbReference type="STRING" id="224308.BSU19639"/>
<dbReference type="PaxDb" id="224308-BSU19639"/>
<dbReference type="EnsemblBacteria" id="CAX52640">
    <property type="protein sequence ID" value="CAX52640"/>
    <property type="gene ID" value="BSU_19639"/>
</dbReference>
<dbReference type="GeneID" id="8303105"/>
<dbReference type="KEGG" id="bsu:BSU19639"/>
<dbReference type="PATRIC" id="fig|224308.179.peg.2148"/>
<dbReference type="InParanoid" id="C0H432"/>
<dbReference type="OrthoDB" id="2925843at2"/>
<dbReference type="BioCyc" id="BSUB:BSU19639-MONOMER"/>
<dbReference type="Proteomes" id="UP000001570">
    <property type="component" value="Chromosome"/>
</dbReference>
<sequence length="41" mass="4681">MGKKHRNRITGQKKNNHIPEKDIIAAEEAHGKEYSAAKRKP</sequence>
<accession>C0H432</accession>
<feature type="chain" id="PRO_0000379105" description="Uncharacterized protein YoyE">
    <location>
        <begin position="1"/>
        <end position="41"/>
    </location>
</feature>
<feature type="region of interest" description="Disordered" evidence="1">
    <location>
        <begin position="1"/>
        <end position="41"/>
    </location>
</feature>
<feature type="compositionally biased region" description="Basic and acidic residues" evidence="1">
    <location>
        <begin position="17"/>
        <end position="41"/>
    </location>
</feature>
<name>YOYE_BACSU</name>
<evidence type="ECO:0000256" key="1">
    <source>
        <dbReference type="SAM" id="MobiDB-lite"/>
    </source>
</evidence>